<organism>
    <name type="scientific">Latilactobacillus sakei subsp. sakei (strain 23K)</name>
    <name type="common">Lactobacillus sakei subsp. sakei</name>
    <dbReference type="NCBI Taxonomy" id="314315"/>
    <lineage>
        <taxon>Bacteria</taxon>
        <taxon>Bacillati</taxon>
        <taxon>Bacillota</taxon>
        <taxon>Bacilli</taxon>
        <taxon>Lactobacillales</taxon>
        <taxon>Lactobacillaceae</taxon>
        <taxon>Latilactobacillus</taxon>
    </lineage>
</organism>
<keyword id="KW-0963">Cytoplasm</keyword>
<keyword id="KW-0235">DNA replication</keyword>
<keyword id="KW-0236">DNA replication inhibitor</keyword>
<keyword id="KW-0479">Metal-binding</keyword>
<keyword id="KW-1185">Reference proteome</keyword>
<keyword id="KW-0862">Zinc</keyword>
<gene>
    <name evidence="1" type="primary">yabA</name>
    <name type="ordered locus">LCA_0343</name>
</gene>
<sequence>MSKTDLYEQLLTIEQQAKLTFDGITEMKAVLSKVLEENAELEIENKHLREHLQELQQTTEETDTKDLSQGLSKSKQNLQNLYEEGFHICPYFYGSRRENDEPCAFCNDVIYGERTAD</sequence>
<reference key="1">
    <citation type="journal article" date="2005" name="Nat. Biotechnol.">
        <title>The complete genome sequence of the meat-borne lactic acid bacterium Lactobacillus sakei 23K.</title>
        <authorList>
            <person name="Chaillou S."/>
            <person name="Champomier-Verges M.-C."/>
            <person name="Cornet M."/>
            <person name="Crutz-Le Coq A.-M."/>
            <person name="Dudez A.-M."/>
            <person name="Martin V."/>
            <person name="Beaufils S."/>
            <person name="Darbon-Rongere E."/>
            <person name="Bossy R."/>
            <person name="Loux V."/>
            <person name="Zagorec M."/>
        </authorList>
    </citation>
    <scope>NUCLEOTIDE SEQUENCE [LARGE SCALE GENOMIC DNA]</scope>
    <source>
        <strain>23K</strain>
    </source>
</reference>
<accession>Q38YT3</accession>
<dbReference type="EMBL" id="CR936503">
    <property type="protein sequence ID" value="CAI54644.1"/>
    <property type="molecule type" value="Genomic_DNA"/>
</dbReference>
<dbReference type="RefSeq" id="WP_011374052.1">
    <property type="nucleotide sequence ID" value="NC_007576.1"/>
</dbReference>
<dbReference type="SMR" id="Q38YT3"/>
<dbReference type="STRING" id="314315.LCA_0343"/>
<dbReference type="KEGG" id="lsa:LCA_0343"/>
<dbReference type="eggNOG" id="COG4467">
    <property type="taxonomic scope" value="Bacteria"/>
</dbReference>
<dbReference type="HOGENOM" id="CLU_157169_0_0_9"/>
<dbReference type="OrthoDB" id="2112130at2"/>
<dbReference type="Proteomes" id="UP000002707">
    <property type="component" value="Chromosome"/>
</dbReference>
<dbReference type="GO" id="GO:0009295">
    <property type="term" value="C:nucleoid"/>
    <property type="evidence" value="ECO:0007669"/>
    <property type="project" value="UniProtKB-SubCell"/>
</dbReference>
<dbReference type="GO" id="GO:0006260">
    <property type="term" value="P:DNA replication"/>
    <property type="evidence" value="ECO:0007669"/>
    <property type="project" value="UniProtKB-UniRule"/>
</dbReference>
<dbReference type="HAMAP" id="MF_01159">
    <property type="entry name" value="YabA"/>
    <property type="match status" value="1"/>
</dbReference>
<dbReference type="InterPro" id="IPR010377">
    <property type="entry name" value="YabA"/>
</dbReference>
<dbReference type="Pfam" id="PF06156">
    <property type="entry name" value="YabA"/>
    <property type="match status" value="1"/>
</dbReference>
<dbReference type="PIRSF" id="PIRSF021439">
    <property type="entry name" value="DUF972"/>
    <property type="match status" value="1"/>
</dbReference>
<protein>
    <recommendedName>
        <fullName evidence="1">Replication initiation control protein YabA</fullName>
    </recommendedName>
</protein>
<feature type="chain" id="PRO_1000065581" description="Replication initiation control protein YabA">
    <location>
        <begin position="1"/>
        <end position="117"/>
    </location>
</feature>
<feature type="binding site" evidence="1">
    <location>
        <position position="87"/>
    </location>
    <ligand>
        <name>Zn(2+)</name>
        <dbReference type="ChEBI" id="CHEBI:29105"/>
    </ligand>
</feature>
<feature type="binding site" evidence="1">
    <location>
        <position position="89"/>
    </location>
    <ligand>
        <name>Zn(2+)</name>
        <dbReference type="ChEBI" id="CHEBI:29105"/>
    </ligand>
</feature>
<feature type="binding site" evidence="1">
    <location>
        <position position="103"/>
    </location>
    <ligand>
        <name>Zn(2+)</name>
        <dbReference type="ChEBI" id="CHEBI:29105"/>
    </ligand>
</feature>
<feature type="binding site" evidence="1">
    <location>
        <position position="106"/>
    </location>
    <ligand>
        <name>Zn(2+)</name>
        <dbReference type="ChEBI" id="CHEBI:29105"/>
    </ligand>
</feature>
<proteinExistence type="inferred from homology"/>
<comment type="function">
    <text evidence="1">Involved in control of chromosome replication initiation. Inhibits the cooperative binding of DnaA to the oriC region, thus negatively regulating initiation of chromosome replication. Inhibits the ability of DnaA-ATP to form a helix on DNA; does not disassemble preformed DnaA-DNA helices. Decreases the residence time of DnaA on the chromosome at its binding sites (oriC, replication forks and promoter-binding sites). Tethers DnaA to the replication machinery via the DNA polymerase beta sliding clamp subunit (dnaN). Associates with oriC and other DnaA targets on the chromosome in a DnaA-dependent manner.</text>
</comment>
<comment type="cofactor">
    <cofactor evidence="1">
        <name>Zn(2+)</name>
        <dbReference type="ChEBI" id="CHEBI:29105"/>
    </cofactor>
    <text evidence="1">Binds 1 zinc ion per subunit.</text>
</comment>
<comment type="subunit">
    <text evidence="1">Homotetramer. Interacts with both DnaA and DnaN, acting as a bridge between these two proteins.</text>
</comment>
<comment type="subcellular location">
    <subcellularLocation>
        <location evidence="1">Cytoplasm</location>
        <location evidence="1">Nucleoid</location>
    </subcellularLocation>
    <text evidence="1">Localizes in tight foci, which correspond to the replisome at mid-cell throughout the cell cycle.</text>
</comment>
<comment type="similarity">
    <text evidence="1">Belongs to the YabA family.</text>
</comment>
<name>YABA_LATSS</name>
<evidence type="ECO:0000255" key="1">
    <source>
        <dbReference type="HAMAP-Rule" id="MF_01159"/>
    </source>
</evidence>